<feature type="chain" id="PRO_0000149020" description="Ribosome biogenesis protein Nop10">
    <location>
        <begin position="1"/>
        <end position="51"/>
    </location>
</feature>
<accession>Q6LWK3</accession>
<keyword id="KW-1185">Reference proteome</keyword>
<keyword id="KW-0687">Ribonucleoprotein</keyword>
<keyword id="KW-0690">Ribosome biogenesis</keyword>
<keyword id="KW-0698">rRNA processing</keyword>
<proteinExistence type="inferred from homology"/>
<dbReference type="EMBL" id="BX950229">
    <property type="protein sequence ID" value="CAF31262.1"/>
    <property type="molecule type" value="Genomic_DNA"/>
</dbReference>
<dbReference type="RefSeq" id="WP_011171650.1">
    <property type="nucleotide sequence ID" value="NC_005791.1"/>
</dbReference>
<dbReference type="SMR" id="Q6LWK3"/>
<dbReference type="STRING" id="267377.MMP1706"/>
<dbReference type="EnsemblBacteria" id="CAF31262">
    <property type="protein sequence ID" value="CAF31262"/>
    <property type="gene ID" value="MMP1706"/>
</dbReference>
<dbReference type="KEGG" id="mmp:MMP1706"/>
<dbReference type="PATRIC" id="fig|267377.15.peg.1749"/>
<dbReference type="eggNOG" id="arCOG00906">
    <property type="taxonomic scope" value="Archaea"/>
</dbReference>
<dbReference type="HOGENOM" id="CLU_196480_1_0_2"/>
<dbReference type="OrthoDB" id="7259at2157"/>
<dbReference type="Proteomes" id="UP000000590">
    <property type="component" value="Chromosome"/>
</dbReference>
<dbReference type="GO" id="GO:1990904">
    <property type="term" value="C:ribonucleoprotein complex"/>
    <property type="evidence" value="ECO:0007669"/>
    <property type="project" value="UniProtKB-KW"/>
</dbReference>
<dbReference type="GO" id="GO:0030515">
    <property type="term" value="F:snoRNA binding"/>
    <property type="evidence" value="ECO:0007669"/>
    <property type="project" value="InterPro"/>
</dbReference>
<dbReference type="GO" id="GO:0001522">
    <property type="term" value="P:pseudouridine synthesis"/>
    <property type="evidence" value="ECO:0007669"/>
    <property type="project" value="InterPro"/>
</dbReference>
<dbReference type="GO" id="GO:0006364">
    <property type="term" value="P:rRNA processing"/>
    <property type="evidence" value="ECO:0007669"/>
    <property type="project" value="UniProtKB-UniRule"/>
</dbReference>
<dbReference type="Gene3D" id="2.20.28.40">
    <property type="entry name" value="H/ACA ribonucleoprotein complex, subunit Nop10"/>
    <property type="match status" value="1"/>
</dbReference>
<dbReference type="HAMAP" id="MF_00803">
    <property type="entry name" value="Nop10"/>
    <property type="match status" value="1"/>
</dbReference>
<dbReference type="InterPro" id="IPR007264">
    <property type="entry name" value="H/ACA_rnp_Nop10"/>
</dbReference>
<dbReference type="InterPro" id="IPR036756">
    <property type="entry name" value="H/ACA_rnp_Nop10_sf"/>
</dbReference>
<dbReference type="InterPro" id="IPR023532">
    <property type="entry name" value="Nop10_arc-typ"/>
</dbReference>
<dbReference type="NCBIfam" id="NF009623">
    <property type="entry name" value="PRK13130.1"/>
    <property type="match status" value="1"/>
</dbReference>
<dbReference type="Pfam" id="PF04135">
    <property type="entry name" value="Nop10p"/>
    <property type="match status" value="1"/>
</dbReference>
<dbReference type="SUPFAM" id="SSF144210">
    <property type="entry name" value="Nop10-like SnoRNP"/>
    <property type="match status" value="1"/>
</dbReference>
<protein>
    <recommendedName>
        <fullName>Ribosome biogenesis protein Nop10</fullName>
    </recommendedName>
</protein>
<organism>
    <name type="scientific">Methanococcus maripaludis (strain DSM 14266 / JCM 13030 / NBRC 101832 / S2 / LL)</name>
    <dbReference type="NCBI Taxonomy" id="267377"/>
    <lineage>
        <taxon>Archaea</taxon>
        <taxon>Methanobacteriati</taxon>
        <taxon>Methanobacteriota</taxon>
        <taxon>Methanomada group</taxon>
        <taxon>Methanococci</taxon>
        <taxon>Methanococcales</taxon>
        <taxon>Methanococcaceae</taxon>
        <taxon>Methanococcus</taxon>
    </lineage>
</organism>
<comment type="function">
    <text evidence="1">Involved in ribosome biogenesis; more specifically in 18S rRNA pseudouridylation and in cleavage of pre-rRNA.</text>
</comment>
<comment type="similarity">
    <text evidence="2">Belongs to the NOP10 family.</text>
</comment>
<reference key="1">
    <citation type="journal article" date="2004" name="J. Bacteriol.">
        <title>Complete genome sequence of the genetically tractable hydrogenotrophic methanogen Methanococcus maripaludis.</title>
        <authorList>
            <person name="Hendrickson E.L."/>
            <person name="Kaul R."/>
            <person name="Zhou Y."/>
            <person name="Bovee D."/>
            <person name="Chapman P."/>
            <person name="Chung J."/>
            <person name="Conway de Macario E."/>
            <person name="Dodsworth J.A."/>
            <person name="Gillett W."/>
            <person name="Graham D.E."/>
            <person name="Hackett M."/>
            <person name="Haydock A.K."/>
            <person name="Kang A."/>
            <person name="Land M.L."/>
            <person name="Levy R."/>
            <person name="Lie T.J."/>
            <person name="Major T.A."/>
            <person name="Moore B.C."/>
            <person name="Porat I."/>
            <person name="Palmeiri A."/>
            <person name="Rouse G."/>
            <person name="Saenphimmachak C."/>
            <person name="Soell D."/>
            <person name="Van Dien S."/>
            <person name="Wang T."/>
            <person name="Whitman W.B."/>
            <person name="Xia Q."/>
            <person name="Zhang Y."/>
            <person name="Larimer F.W."/>
            <person name="Olson M.V."/>
            <person name="Leigh J.A."/>
        </authorList>
    </citation>
    <scope>NUCLEOTIDE SEQUENCE [LARGE SCALE GENOMIC DNA]</scope>
    <source>
        <strain>DSM 14266 / JCM 13030 / NBRC 101832 / S2 / LL</strain>
    </source>
</reference>
<gene>
    <name type="primary">nop10</name>
    <name type="ordered locus">MMP1706</name>
</gene>
<name>NOP10_METMP</name>
<evidence type="ECO:0000250" key="1"/>
<evidence type="ECO:0000305" key="2"/>
<sequence length="51" mass="5977">MKMKKCPKCGKYTLKDFCSECNEKSVTVKPPRFSPVDKYGKYRRALKKAKM</sequence>